<gene>
    <name type="ordered locus">PSPPH_1328</name>
</gene>
<protein>
    <recommendedName>
        <fullName evidence="1">Oxaloacetate decarboxylase</fullName>
        <ecNumber evidence="1">4.1.1.112</ecNumber>
    </recommendedName>
</protein>
<keyword id="KW-0210">Decarboxylase</keyword>
<keyword id="KW-0456">Lyase</keyword>
<keyword id="KW-0460">Magnesium</keyword>
<keyword id="KW-0479">Metal-binding</keyword>
<proteinExistence type="inferred from homology"/>
<comment type="function">
    <text evidence="1">Catalyzes the decarboxylation of oxaloacetate into pyruvate. Seems to play a role in maintaining cellular concentrations of bicarbonate and pyruvate.</text>
</comment>
<comment type="catalytic activity">
    <reaction evidence="1">
        <text>oxaloacetate + H(+) = pyruvate + CO2</text>
        <dbReference type="Rhea" id="RHEA:15641"/>
        <dbReference type="ChEBI" id="CHEBI:15361"/>
        <dbReference type="ChEBI" id="CHEBI:15378"/>
        <dbReference type="ChEBI" id="CHEBI:16452"/>
        <dbReference type="ChEBI" id="CHEBI:16526"/>
        <dbReference type="EC" id="4.1.1.112"/>
    </reaction>
</comment>
<comment type="cofactor">
    <cofactor evidence="1">
        <name>Mg(2+)</name>
        <dbReference type="ChEBI" id="CHEBI:18420"/>
    </cofactor>
    <text evidence="1">Binds 1 Mg(2+) ion per subunit.</text>
</comment>
<comment type="subunit">
    <text evidence="1">Homotetramer; dimer of dimers.</text>
</comment>
<comment type="similarity">
    <text evidence="2">Belongs to the isocitrate lyase/PEP mutase superfamily. Oxaloacetate decarboxylase family.</text>
</comment>
<sequence length="289" mass="31350">MPKASHQDLRRSFRALTSSNSCFHTASVFDPMSARIAADLGFEVGILGGSVASLQVLAAPDFALITLSEFVEQATRIGRVAQLPVIADADHGYGNALNVMRTVVELERAGISALTIEDTLLPAQFGRKSTDLISTAEGVGKIRAALEARVDPEMSIFARTNAAIIPVQEAISRVQQYQAAGADGITIVGIRDFDHLAQISEGVTVPLMLVTYGNPELHDNARLAEMGVRVCVHGHAAYFAAIKATYDCLREQRQILGSESNMSATELTHTYTQPEDYVEWARKFMNVNE</sequence>
<name>OADC_PSE14</name>
<feature type="chain" id="PRO_0000364072" description="Oxaloacetate decarboxylase">
    <location>
        <begin position="1"/>
        <end position="289"/>
    </location>
</feature>
<feature type="binding site" evidence="1">
    <location>
        <position position="50"/>
    </location>
    <ligand>
        <name>substrate</name>
    </ligand>
</feature>
<feature type="binding site" evidence="1">
    <location>
        <position position="88"/>
    </location>
    <ligand>
        <name>Mg(2+)</name>
        <dbReference type="ChEBI" id="CHEBI:18420"/>
    </ligand>
</feature>
<feature type="binding site" evidence="1">
    <location>
        <position position="159"/>
    </location>
    <ligand>
        <name>substrate</name>
    </ligand>
</feature>
<feature type="binding site" evidence="1">
    <location>
        <position position="235"/>
    </location>
    <ligand>
        <name>substrate</name>
    </ligand>
</feature>
<dbReference type="EC" id="4.1.1.112" evidence="1"/>
<dbReference type="EMBL" id="CP000058">
    <property type="protein sequence ID" value="AAZ34063.1"/>
    <property type="molecule type" value="Genomic_DNA"/>
</dbReference>
<dbReference type="RefSeq" id="WP_002552494.1">
    <property type="nucleotide sequence ID" value="NC_005773.3"/>
</dbReference>
<dbReference type="SMR" id="Q48LY6"/>
<dbReference type="KEGG" id="psp:PSPPH_1328"/>
<dbReference type="eggNOG" id="COG2513">
    <property type="taxonomic scope" value="Bacteria"/>
</dbReference>
<dbReference type="HOGENOM" id="CLU_027389_3_2_6"/>
<dbReference type="Proteomes" id="UP000000551">
    <property type="component" value="Chromosome"/>
</dbReference>
<dbReference type="GO" id="GO:0000287">
    <property type="term" value="F:magnesium ion binding"/>
    <property type="evidence" value="ECO:0007669"/>
    <property type="project" value="UniProtKB-UniRule"/>
</dbReference>
<dbReference type="GO" id="GO:0046421">
    <property type="term" value="F:methylisocitrate lyase activity"/>
    <property type="evidence" value="ECO:0007669"/>
    <property type="project" value="TreeGrafter"/>
</dbReference>
<dbReference type="GO" id="GO:0008948">
    <property type="term" value="F:oxaloacetate decarboxylase activity"/>
    <property type="evidence" value="ECO:0007669"/>
    <property type="project" value="UniProtKB-UniRule"/>
</dbReference>
<dbReference type="GO" id="GO:0006107">
    <property type="term" value="P:oxaloacetate metabolic process"/>
    <property type="evidence" value="ECO:0007669"/>
    <property type="project" value="UniProtKB-UniRule"/>
</dbReference>
<dbReference type="GO" id="GO:0019629">
    <property type="term" value="P:propionate catabolic process, 2-methylcitrate cycle"/>
    <property type="evidence" value="ECO:0007669"/>
    <property type="project" value="TreeGrafter"/>
</dbReference>
<dbReference type="GO" id="GO:0042866">
    <property type="term" value="P:pyruvate biosynthetic process"/>
    <property type="evidence" value="ECO:0007669"/>
    <property type="project" value="UniProtKB-UniRule"/>
</dbReference>
<dbReference type="CDD" id="cd00377">
    <property type="entry name" value="ICL_PEPM"/>
    <property type="match status" value="1"/>
</dbReference>
<dbReference type="FunFam" id="3.20.20.60:FF:000015">
    <property type="entry name" value="Oxaloacetate decarboxylase"/>
    <property type="match status" value="1"/>
</dbReference>
<dbReference type="Gene3D" id="3.20.20.60">
    <property type="entry name" value="Phosphoenolpyruvate-binding domains"/>
    <property type="match status" value="1"/>
</dbReference>
<dbReference type="HAMAP" id="MF_01299">
    <property type="entry name" value="OadC"/>
    <property type="match status" value="1"/>
</dbReference>
<dbReference type="InterPro" id="IPR039556">
    <property type="entry name" value="ICL/PEPM"/>
</dbReference>
<dbReference type="InterPro" id="IPR023687">
    <property type="entry name" value="Oxaloacetate_deCOase_bac"/>
</dbReference>
<dbReference type="InterPro" id="IPR015813">
    <property type="entry name" value="Pyrv/PenolPyrv_kinase-like_dom"/>
</dbReference>
<dbReference type="InterPro" id="IPR040442">
    <property type="entry name" value="Pyrv_kinase-like_dom_sf"/>
</dbReference>
<dbReference type="PANTHER" id="PTHR42905:SF3">
    <property type="entry name" value="OXALOACETATE DECARBOXYLASE"/>
    <property type="match status" value="1"/>
</dbReference>
<dbReference type="PANTHER" id="PTHR42905">
    <property type="entry name" value="PHOSPHOENOLPYRUVATE CARBOXYLASE"/>
    <property type="match status" value="1"/>
</dbReference>
<dbReference type="Pfam" id="PF13714">
    <property type="entry name" value="PEP_mutase"/>
    <property type="match status" value="1"/>
</dbReference>
<dbReference type="SUPFAM" id="SSF51621">
    <property type="entry name" value="Phosphoenolpyruvate/pyruvate domain"/>
    <property type="match status" value="1"/>
</dbReference>
<accession>Q48LY6</accession>
<organism>
    <name type="scientific">Pseudomonas savastanoi pv. phaseolicola (strain 1448A / Race 6)</name>
    <name type="common">Pseudomonas syringae pv. phaseolicola (strain 1448A / Race 6)</name>
    <dbReference type="NCBI Taxonomy" id="264730"/>
    <lineage>
        <taxon>Bacteria</taxon>
        <taxon>Pseudomonadati</taxon>
        <taxon>Pseudomonadota</taxon>
        <taxon>Gammaproteobacteria</taxon>
        <taxon>Pseudomonadales</taxon>
        <taxon>Pseudomonadaceae</taxon>
        <taxon>Pseudomonas</taxon>
    </lineage>
</organism>
<evidence type="ECO:0000255" key="1">
    <source>
        <dbReference type="HAMAP-Rule" id="MF_01299"/>
    </source>
</evidence>
<evidence type="ECO:0000305" key="2"/>
<reference key="1">
    <citation type="journal article" date="2005" name="J. Bacteriol.">
        <title>Whole-genome sequence analysis of Pseudomonas syringae pv. phaseolicola 1448A reveals divergence among pathovars in genes involved in virulence and transposition.</title>
        <authorList>
            <person name="Joardar V."/>
            <person name="Lindeberg M."/>
            <person name="Jackson R.W."/>
            <person name="Selengut J."/>
            <person name="Dodson R."/>
            <person name="Brinkac L.M."/>
            <person name="Daugherty S.C."/>
            <person name="DeBoy R.T."/>
            <person name="Durkin A.S."/>
            <person name="Gwinn Giglio M."/>
            <person name="Madupu R."/>
            <person name="Nelson W.C."/>
            <person name="Rosovitz M.J."/>
            <person name="Sullivan S.A."/>
            <person name="Crabtree J."/>
            <person name="Creasy T."/>
            <person name="Davidsen T.M."/>
            <person name="Haft D.H."/>
            <person name="Zafar N."/>
            <person name="Zhou L."/>
            <person name="Halpin R."/>
            <person name="Holley T."/>
            <person name="Khouri H.M."/>
            <person name="Feldblyum T.V."/>
            <person name="White O."/>
            <person name="Fraser C.M."/>
            <person name="Chatterjee A.K."/>
            <person name="Cartinhour S."/>
            <person name="Schneider D."/>
            <person name="Mansfield J.W."/>
            <person name="Collmer A."/>
            <person name="Buell R."/>
        </authorList>
    </citation>
    <scope>NUCLEOTIDE SEQUENCE [LARGE SCALE GENOMIC DNA]</scope>
    <source>
        <strain>1448A / Race 6</strain>
    </source>
</reference>